<organism>
    <name type="scientific">Shewanella denitrificans (strain OS217 / ATCC BAA-1090 / DSM 15013)</name>
    <dbReference type="NCBI Taxonomy" id="318161"/>
    <lineage>
        <taxon>Bacteria</taxon>
        <taxon>Pseudomonadati</taxon>
        <taxon>Pseudomonadota</taxon>
        <taxon>Gammaproteobacteria</taxon>
        <taxon>Alteromonadales</taxon>
        <taxon>Shewanellaceae</taxon>
        <taxon>Shewanella</taxon>
    </lineage>
</organism>
<dbReference type="EC" id="2.1.1.190" evidence="1"/>
<dbReference type="EMBL" id="CP000302">
    <property type="protein sequence ID" value="ABE54478.1"/>
    <property type="molecule type" value="Genomic_DNA"/>
</dbReference>
<dbReference type="RefSeq" id="WP_011495638.1">
    <property type="nucleotide sequence ID" value="NC_007954.1"/>
</dbReference>
<dbReference type="SMR" id="Q12PZ8"/>
<dbReference type="STRING" id="318161.Sden_1192"/>
<dbReference type="KEGG" id="sdn:Sden_1192"/>
<dbReference type="eggNOG" id="COG2265">
    <property type="taxonomic scope" value="Bacteria"/>
</dbReference>
<dbReference type="HOGENOM" id="CLU_014689_8_2_6"/>
<dbReference type="OrthoDB" id="9804590at2"/>
<dbReference type="Proteomes" id="UP000001982">
    <property type="component" value="Chromosome"/>
</dbReference>
<dbReference type="GO" id="GO:0051539">
    <property type="term" value="F:4 iron, 4 sulfur cluster binding"/>
    <property type="evidence" value="ECO:0007669"/>
    <property type="project" value="UniProtKB-KW"/>
</dbReference>
<dbReference type="GO" id="GO:0005506">
    <property type="term" value="F:iron ion binding"/>
    <property type="evidence" value="ECO:0007669"/>
    <property type="project" value="UniProtKB-UniRule"/>
</dbReference>
<dbReference type="GO" id="GO:0003723">
    <property type="term" value="F:RNA binding"/>
    <property type="evidence" value="ECO:0007669"/>
    <property type="project" value="InterPro"/>
</dbReference>
<dbReference type="GO" id="GO:0070041">
    <property type="term" value="F:rRNA (uridine-C5-)-methyltransferase activity"/>
    <property type="evidence" value="ECO:0007669"/>
    <property type="project" value="UniProtKB-UniRule"/>
</dbReference>
<dbReference type="GO" id="GO:0070475">
    <property type="term" value="P:rRNA base methylation"/>
    <property type="evidence" value="ECO:0007669"/>
    <property type="project" value="TreeGrafter"/>
</dbReference>
<dbReference type="CDD" id="cd02440">
    <property type="entry name" value="AdoMet_MTases"/>
    <property type="match status" value="1"/>
</dbReference>
<dbReference type="FunFam" id="3.40.50.150:FF:000009">
    <property type="entry name" value="23S rRNA (Uracil(1939)-C(5))-methyltransferase RlmD"/>
    <property type="match status" value="1"/>
</dbReference>
<dbReference type="FunFam" id="2.40.50.140:FF:000097">
    <property type="entry name" value="23S rRNA (uracil(1939)-C(5))-methyltransferase RlmD"/>
    <property type="match status" value="1"/>
</dbReference>
<dbReference type="Gene3D" id="2.40.50.1070">
    <property type="match status" value="1"/>
</dbReference>
<dbReference type="Gene3D" id="2.40.50.140">
    <property type="entry name" value="Nucleic acid-binding proteins"/>
    <property type="match status" value="1"/>
</dbReference>
<dbReference type="Gene3D" id="3.40.50.150">
    <property type="entry name" value="Vaccinia Virus protein VP39"/>
    <property type="match status" value="1"/>
</dbReference>
<dbReference type="HAMAP" id="MF_01010">
    <property type="entry name" value="23SrRNA_methyltr_RlmD"/>
    <property type="match status" value="1"/>
</dbReference>
<dbReference type="InterPro" id="IPR001566">
    <property type="entry name" value="23S_rRNA_MeTrfase_RlmD"/>
</dbReference>
<dbReference type="InterPro" id="IPR030390">
    <property type="entry name" value="MeTrfase_TrmA_AS"/>
</dbReference>
<dbReference type="InterPro" id="IPR030391">
    <property type="entry name" value="MeTrfase_TrmA_CS"/>
</dbReference>
<dbReference type="InterPro" id="IPR012340">
    <property type="entry name" value="NA-bd_OB-fold"/>
</dbReference>
<dbReference type="InterPro" id="IPR029063">
    <property type="entry name" value="SAM-dependent_MTases_sf"/>
</dbReference>
<dbReference type="InterPro" id="IPR002792">
    <property type="entry name" value="TRAM_dom"/>
</dbReference>
<dbReference type="InterPro" id="IPR010280">
    <property type="entry name" value="U5_MeTrfase_fam"/>
</dbReference>
<dbReference type="NCBIfam" id="NF009639">
    <property type="entry name" value="PRK13168.1"/>
    <property type="match status" value="1"/>
</dbReference>
<dbReference type="NCBIfam" id="TIGR00479">
    <property type="entry name" value="rumA"/>
    <property type="match status" value="1"/>
</dbReference>
<dbReference type="PANTHER" id="PTHR11061:SF49">
    <property type="entry name" value="23S RRNA (URACIL(1939)-C(5))-METHYLTRANSFERASE RLMD"/>
    <property type="match status" value="1"/>
</dbReference>
<dbReference type="PANTHER" id="PTHR11061">
    <property type="entry name" value="RNA M5U METHYLTRANSFERASE"/>
    <property type="match status" value="1"/>
</dbReference>
<dbReference type="Pfam" id="PF01938">
    <property type="entry name" value="TRAM"/>
    <property type="match status" value="1"/>
</dbReference>
<dbReference type="Pfam" id="PF05958">
    <property type="entry name" value="tRNA_U5-meth_tr"/>
    <property type="match status" value="1"/>
</dbReference>
<dbReference type="SUPFAM" id="SSF50249">
    <property type="entry name" value="Nucleic acid-binding proteins"/>
    <property type="match status" value="1"/>
</dbReference>
<dbReference type="SUPFAM" id="SSF53335">
    <property type="entry name" value="S-adenosyl-L-methionine-dependent methyltransferases"/>
    <property type="match status" value="1"/>
</dbReference>
<dbReference type="PROSITE" id="PS51687">
    <property type="entry name" value="SAM_MT_RNA_M5U"/>
    <property type="match status" value="1"/>
</dbReference>
<dbReference type="PROSITE" id="PS50926">
    <property type="entry name" value="TRAM"/>
    <property type="match status" value="1"/>
</dbReference>
<dbReference type="PROSITE" id="PS01230">
    <property type="entry name" value="TRMA_1"/>
    <property type="match status" value="1"/>
</dbReference>
<dbReference type="PROSITE" id="PS01231">
    <property type="entry name" value="TRMA_2"/>
    <property type="match status" value="1"/>
</dbReference>
<keyword id="KW-0004">4Fe-4S</keyword>
<keyword id="KW-0408">Iron</keyword>
<keyword id="KW-0411">Iron-sulfur</keyword>
<keyword id="KW-0479">Metal-binding</keyword>
<keyword id="KW-0489">Methyltransferase</keyword>
<keyword id="KW-1185">Reference proteome</keyword>
<keyword id="KW-0698">rRNA processing</keyword>
<keyword id="KW-0949">S-adenosyl-L-methionine</keyword>
<keyword id="KW-0808">Transferase</keyword>
<gene>
    <name evidence="1" type="primary">rlmD</name>
    <name type="synonym">rumA</name>
    <name type="ordered locus">Sden_1192</name>
</gene>
<comment type="function">
    <text evidence="1">Catalyzes the formation of 5-methyl-uridine at position 1939 (m5U1939) in 23S rRNA.</text>
</comment>
<comment type="catalytic activity">
    <reaction evidence="1">
        <text>uridine(1939) in 23S rRNA + S-adenosyl-L-methionine = 5-methyluridine(1939) in 23S rRNA + S-adenosyl-L-homocysteine + H(+)</text>
        <dbReference type="Rhea" id="RHEA:42908"/>
        <dbReference type="Rhea" id="RHEA-COMP:10278"/>
        <dbReference type="Rhea" id="RHEA-COMP:10279"/>
        <dbReference type="ChEBI" id="CHEBI:15378"/>
        <dbReference type="ChEBI" id="CHEBI:57856"/>
        <dbReference type="ChEBI" id="CHEBI:59789"/>
        <dbReference type="ChEBI" id="CHEBI:65315"/>
        <dbReference type="ChEBI" id="CHEBI:74447"/>
        <dbReference type="EC" id="2.1.1.190"/>
    </reaction>
</comment>
<comment type="similarity">
    <text evidence="1">Belongs to the class I-like SAM-binding methyltransferase superfamily. RNA M5U methyltransferase family. RlmD subfamily.</text>
</comment>
<feature type="chain" id="PRO_0000282061" description="23S rRNA (uracil(1939)-C(5))-methyltransferase RlmD">
    <location>
        <begin position="1"/>
        <end position="468"/>
    </location>
</feature>
<feature type="domain" description="TRAM" evidence="1">
    <location>
        <begin position="12"/>
        <end position="70"/>
    </location>
</feature>
<feature type="active site" description="Nucleophile" evidence="1">
    <location>
        <position position="424"/>
    </location>
</feature>
<feature type="binding site" evidence="1">
    <location>
        <position position="83"/>
    </location>
    <ligand>
        <name>[4Fe-4S] cluster</name>
        <dbReference type="ChEBI" id="CHEBI:49883"/>
    </ligand>
</feature>
<feature type="binding site" evidence="1">
    <location>
        <position position="89"/>
    </location>
    <ligand>
        <name>[4Fe-4S] cluster</name>
        <dbReference type="ChEBI" id="CHEBI:49883"/>
    </ligand>
</feature>
<feature type="binding site" evidence="1">
    <location>
        <position position="92"/>
    </location>
    <ligand>
        <name>[4Fe-4S] cluster</name>
        <dbReference type="ChEBI" id="CHEBI:49883"/>
    </ligand>
</feature>
<feature type="binding site" evidence="1">
    <location>
        <position position="174"/>
    </location>
    <ligand>
        <name>[4Fe-4S] cluster</name>
        <dbReference type="ChEBI" id="CHEBI:49883"/>
    </ligand>
</feature>
<feature type="binding site" evidence="1">
    <location>
        <position position="296"/>
    </location>
    <ligand>
        <name>S-adenosyl-L-methionine</name>
        <dbReference type="ChEBI" id="CHEBI:59789"/>
    </ligand>
</feature>
<feature type="binding site" evidence="1">
    <location>
        <position position="325"/>
    </location>
    <ligand>
        <name>S-adenosyl-L-methionine</name>
        <dbReference type="ChEBI" id="CHEBI:59789"/>
    </ligand>
</feature>
<feature type="binding site" evidence="1">
    <location>
        <position position="330"/>
    </location>
    <ligand>
        <name>S-adenosyl-L-methionine</name>
        <dbReference type="ChEBI" id="CHEBI:59789"/>
    </ligand>
</feature>
<feature type="binding site" evidence="1">
    <location>
        <position position="351"/>
    </location>
    <ligand>
        <name>S-adenosyl-L-methionine</name>
        <dbReference type="ChEBI" id="CHEBI:59789"/>
    </ligand>
</feature>
<feature type="binding site" evidence="1">
    <location>
        <position position="378"/>
    </location>
    <ligand>
        <name>S-adenosyl-L-methionine</name>
        <dbReference type="ChEBI" id="CHEBI:59789"/>
    </ligand>
</feature>
<feature type="binding site" evidence="1">
    <location>
        <position position="398"/>
    </location>
    <ligand>
        <name>S-adenosyl-L-methionine</name>
        <dbReference type="ChEBI" id="CHEBI:59789"/>
    </ligand>
</feature>
<reference key="1">
    <citation type="submission" date="2006-03" db="EMBL/GenBank/DDBJ databases">
        <title>Complete sequence of Shewanella denitrificans OS217.</title>
        <authorList>
            <consortium name="US DOE Joint Genome Institute"/>
            <person name="Copeland A."/>
            <person name="Lucas S."/>
            <person name="Lapidus A."/>
            <person name="Barry K."/>
            <person name="Detter J.C."/>
            <person name="Glavina del Rio T."/>
            <person name="Hammon N."/>
            <person name="Israni S."/>
            <person name="Dalin E."/>
            <person name="Tice H."/>
            <person name="Pitluck S."/>
            <person name="Brettin T."/>
            <person name="Bruce D."/>
            <person name="Han C."/>
            <person name="Tapia R."/>
            <person name="Gilna P."/>
            <person name="Kiss H."/>
            <person name="Schmutz J."/>
            <person name="Larimer F."/>
            <person name="Land M."/>
            <person name="Hauser L."/>
            <person name="Kyrpides N."/>
            <person name="Lykidis A."/>
            <person name="Richardson P."/>
        </authorList>
    </citation>
    <scope>NUCLEOTIDE SEQUENCE [LARGE SCALE GENOMIC DNA]</scope>
    <source>
        <strain>OS217 / ATCC BAA-1090 / DSM 15013</strain>
    </source>
</reference>
<accession>Q12PZ8</accession>
<name>RLMD_SHEDO</name>
<evidence type="ECO:0000255" key="1">
    <source>
        <dbReference type="HAMAP-Rule" id="MF_01010"/>
    </source>
</evidence>
<sequence length="468" mass="51338">MAQFFKEKANKSKQLSPKLSLNVTQLDHLGAGMAQHQGKVVFIPQALPGERVSVQLTDQKKSFAKAKLIKIEQQSPERADASCPHYGHCGGCDLQHLALDAQQNHKQQSLNELMVKFSGSPVIDPQVQAAPLVSPPWHYRRRARLATYFNNNDKSLKLGFRALSSKQIVPIKQCPVLAEPLSALINPFSLLLARLKAKASLGHLELTQADNGTFAVLRVTKVLPAADIRALASFALTQGINLLLQDDSGALTDVMTMAPAEDEGATQVEQSALTLPEYALSQGQVSCQFTPGNFVQVNAEVNQRMVEQAVNWLDLQVGERVLDLFCGVGNFSLALANRGQNLDGLEVIGVEGVPEMVQQARENAKRNNLANLSFYHADLSADLSNEKWLGKIDKLLLDPARAGAFESLQWLQKMKPKKVVYVSCNPASLARDSSVLLSQGYQLKQLSMIDMFPQTHHIEAMALFEIAT</sequence>
<protein>
    <recommendedName>
        <fullName evidence="1">23S rRNA (uracil(1939)-C(5))-methyltransferase RlmD</fullName>
        <ecNumber evidence="1">2.1.1.190</ecNumber>
    </recommendedName>
    <alternativeName>
        <fullName evidence="1">23S rRNA(m5U1939)-methyltransferase</fullName>
    </alternativeName>
</protein>
<proteinExistence type="inferred from homology"/>